<organism>
    <name type="scientific">Sus scrofa</name>
    <name type="common">Pig</name>
    <dbReference type="NCBI Taxonomy" id="9823"/>
    <lineage>
        <taxon>Eukaryota</taxon>
        <taxon>Metazoa</taxon>
        <taxon>Chordata</taxon>
        <taxon>Craniata</taxon>
        <taxon>Vertebrata</taxon>
        <taxon>Euteleostomi</taxon>
        <taxon>Mammalia</taxon>
        <taxon>Eutheria</taxon>
        <taxon>Laurasiatheria</taxon>
        <taxon>Artiodactyla</taxon>
        <taxon>Suina</taxon>
        <taxon>Suidae</taxon>
        <taxon>Sus</taxon>
    </lineage>
</organism>
<protein>
    <recommendedName>
        <fullName>Seminal plasma protein pB1</fullName>
    </recommendedName>
    <alternativeName>
        <fullName>Protein DQH</fullName>
    </alternativeName>
    <alternativeName>
        <fullName>pAIF-1</fullName>
    </alternativeName>
</protein>
<proteinExistence type="evidence at protein level"/>
<feature type="signal peptide" evidence="2">
    <location>
        <begin position="1"/>
        <end position="25"/>
    </location>
</feature>
<feature type="chain" id="PRO_0000019234" description="Seminal plasma protein pB1">
    <location>
        <begin position="26"/>
        <end position="130"/>
    </location>
</feature>
<feature type="domain" description="Fibronectin type-II 1" evidence="1">
    <location>
        <begin position="39"/>
        <end position="83"/>
    </location>
</feature>
<feature type="domain" description="Fibronectin type-II 2" evidence="1">
    <location>
        <begin position="84"/>
        <end position="130"/>
    </location>
</feature>
<feature type="disulfide bond" evidence="1">
    <location>
        <begin position="44"/>
        <end position="68"/>
    </location>
</feature>
<feature type="disulfide bond" evidence="1">
    <location>
        <begin position="58"/>
        <end position="81"/>
    </location>
</feature>
<feature type="disulfide bond" evidence="1">
    <location>
        <begin position="89"/>
        <end position="115"/>
    </location>
</feature>
<feature type="disulfide bond" evidence="1">
    <location>
        <begin position="103"/>
        <end position="130"/>
    </location>
</feature>
<feature type="sequence conflict" description="In Ref. 2; AA sequence." evidence="3" ref="2">
    <original>W</original>
    <variation>P</variation>
    <location>
        <position position="78"/>
    </location>
</feature>
<feature type="sequence conflict" description="In Ref. 2; AA sequence." evidence="3" ref="2">
    <original>T</original>
    <variation>Q</variation>
    <location>
        <position position="84"/>
    </location>
</feature>
<feature type="sequence conflict" description="In Ref. 2; AA sequence." evidence="3" ref="2">
    <original>P</original>
    <variation>T</variation>
    <location>
        <position position="116"/>
    </location>
</feature>
<feature type="sequence conflict" description="In Ref. 2; AA sequence." evidence="3" ref="2">
    <original>Q</original>
    <variation>R</variation>
    <location>
        <position position="123"/>
    </location>
</feature>
<feature type="sequence conflict" description="In Ref. 2; AA sequence." evidence="3" ref="2">
    <original>R</original>
    <variation>K</variation>
    <location>
        <position position="128"/>
    </location>
</feature>
<sequence length="130" mass="15373">MAPRLGIFLLWAGVSVFLPLDPVNGDQHLPGRFLTPAITSDDKCVFPFIYKGNLYFDCTLHDSTYYWCSVTTYYMKRWRYCRSTDYARCALPFIFRGKEYDSCIKEGSVFSKYWCPVTPNYDQDRAWRYC</sequence>
<keyword id="KW-0903">Direct protein sequencing</keyword>
<keyword id="KW-1015">Disulfide bond</keyword>
<keyword id="KW-0278">Fertilization</keyword>
<keyword id="KW-1185">Reference proteome</keyword>
<keyword id="KW-0677">Repeat</keyword>
<keyword id="KW-0964">Secreted</keyword>
<keyword id="KW-0732">Signal</keyword>
<evidence type="ECO:0000255" key="1">
    <source>
        <dbReference type="PROSITE-ProRule" id="PRU00479"/>
    </source>
</evidence>
<evidence type="ECO:0000269" key="2">
    <source>
    </source>
</evidence>
<evidence type="ECO:0000305" key="3"/>
<comment type="function">
    <text>May form a complex with spermadhesin AQN-1 which possesses phosphorylcholine-binding activity.</text>
</comment>
<comment type="subcellular location">
    <subcellularLocation>
        <location>Secreted</location>
    </subcellularLocation>
</comment>
<comment type="tissue specificity">
    <text>Component of seminal plasma.</text>
</comment>
<comment type="similarity">
    <text evidence="3">Belongs to the seminal plasma protein family.</text>
</comment>
<accession>P80964</accession>
<accession>O46615</accession>
<reference key="1">
    <citation type="journal article" date="1999" name="Mol. Reprod. Dev.">
        <title>Cloning of complementary DNA encoding the pB1 component of the 54-kilodalton glycoprotein of boar seminal plasma.</title>
        <authorList>
            <person name="Plucienniczak G."/>
            <person name="Jagiello A."/>
            <person name="Plucienniczak A."/>
            <person name="Holody D."/>
            <person name="Strzezek J."/>
        </authorList>
    </citation>
    <scope>NUCLEOTIDE SEQUENCE [MRNA]</scope>
</reference>
<reference key="2">
    <citation type="journal article" date="1997" name="FEBS Lett.">
        <title>Isolation and characterization of heparin- and phosphorylcholine-binding proteins of boar and stallion seminal plasma. Primary structure of porcine pB1.</title>
        <authorList>
            <person name="Calvete J.J."/>
            <person name="Raida M."/>
            <person name="Gentzel M."/>
            <person name="Urbanke C."/>
            <person name="Sanz L."/>
            <person name="Toepfer-Petersen E."/>
        </authorList>
    </citation>
    <scope>PROTEIN SEQUENCE OF 26-130</scope>
    <source>
        <strain>Wild boar</strain>
    </source>
</reference>
<dbReference type="EMBL" id="AF047026">
    <property type="protein sequence ID" value="AAD11581.1"/>
    <property type="molecule type" value="mRNA"/>
</dbReference>
<dbReference type="PIR" id="A58837">
    <property type="entry name" value="A58837"/>
</dbReference>
<dbReference type="RefSeq" id="NP_998997.1">
    <property type="nucleotide sequence ID" value="NM_213832.1"/>
</dbReference>
<dbReference type="SMR" id="P80964"/>
<dbReference type="BioGRID" id="1148955">
    <property type="interactions" value="1"/>
</dbReference>
<dbReference type="STRING" id="9823.ENSSSCP00000003307"/>
<dbReference type="PaxDb" id="9823-ENSSSCP00000003307"/>
<dbReference type="Ensembl" id="ENSSSCT00000003390.4">
    <property type="protein sequence ID" value="ENSSSCP00000003307.3"/>
    <property type="gene ID" value="ENSSSCG00000003053.4"/>
</dbReference>
<dbReference type="Ensembl" id="ENSSSCT00115036864">
    <property type="protein sequence ID" value="ENSSSCP00115034875"/>
    <property type="gene ID" value="ENSSSCG00115020806"/>
</dbReference>
<dbReference type="GeneID" id="396806"/>
<dbReference type="KEGG" id="ssc:396806"/>
<dbReference type="CTD" id="407187"/>
<dbReference type="eggNOG" id="KOG1565">
    <property type="taxonomic scope" value="Eukaryota"/>
</dbReference>
<dbReference type="GeneTree" id="ENSGT00940000164580"/>
<dbReference type="HOGENOM" id="CLU_126630_0_0_1"/>
<dbReference type="InParanoid" id="P80964"/>
<dbReference type="OrthoDB" id="406838at2759"/>
<dbReference type="TreeFam" id="TF343543"/>
<dbReference type="Proteomes" id="UP000008227">
    <property type="component" value="Chromosome 6"/>
</dbReference>
<dbReference type="Proteomes" id="UP000314985">
    <property type="component" value="Unplaced"/>
</dbReference>
<dbReference type="Proteomes" id="UP000694570">
    <property type="component" value="Unplaced"/>
</dbReference>
<dbReference type="Proteomes" id="UP000694571">
    <property type="component" value="Unplaced"/>
</dbReference>
<dbReference type="Proteomes" id="UP000694720">
    <property type="component" value="Unplaced"/>
</dbReference>
<dbReference type="Proteomes" id="UP000694722">
    <property type="component" value="Unplaced"/>
</dbReference>
<dbReference type="Proteomes" id="UP000694723">
    <property type="component" value="Unplaced"/>
</dbReference>
<dbReference type="Proteomes" id="UP000694724">
    <property type="component" value="Unplaced"/>
</dbReference>
<dbReference type="Proteomes" id="UP000694725">
    <property type="component" value="Unplaced"/>
</dbReference>
<dbReference type="Proteomes" id="UP000694726">
    <property type="component" value="Unplaced"/>
</dbReference>
<dbReference type="Proteomes" id="UP000694727">
    <property type="component" value="Unplaced"/>
</dbReference>
<dbReference type="Proteomes" id="UP000694728">
    <property type="component" value="Unplaced"/>
</dbReference>
<dbReference type="GO" id="GO:0005615">
    <property type="term" value="C:extracellular space"/>
    <property type="evidence" value="ECO:0007669"/>
    <property type="project" value="InterPro"/>
</dbReference>
<dbReference type="GO" id="GO:0007338">
    <property type="term" value="P:single fertilization"/>
    <property type="evidence" value="ECO:0007669"/>
    <property type="project" value="UniProtKB-KW"/>
</dbReference>
<dbReference type="GO" id="GO:0048240">
    <property type="term" value="P:sperm capacitation"/>
    <property type="evidence" value="ECO:0007669"/>
    <property type="project" value="InterPro"/>
</dbReference>
<dbReference type="CDD" id="cd00062">
    <property type="entry name" value="FN2"/>
    <property type="match status" value="2"/>
</dbReference>
<dbReference type="FunFam" id="2.10.10.10:FF:000003">
    <property type="entry name" value="binder of sperm protein homolog 1"/>
    <property type="match status" value="1"/>
</dbReference>
<dbReference type="FunFam" id="2.10.10.10:FF:000005">
    <property type="entry name" value="Epididymal sperm binding protein 1"/>
    <property type="match status" value="1"/>
</dbReference>
<dbReference type="Gene3D" id="2.10.10.10">
    <property type="entry name" value="Fibronectin, type II, collagen-binding"/>
    <property type="match status" value="2"/>
</dbReference>
<dbReference type="InterPro" id="IPR000562">
    <property type="entry name" value="FN_type2_dom"/>
</dbReference>
<dbReference type="InterPro" id="IPR036943">
    <property type="entry name" value="FN_type2_sf"/>
</dbReference>
<dbReference type="InterPro" id="IPR013806">
    <property type="entry name" value="Kringle-like"/>
</dbReference>
<dbReference type="InterPro" id="IPR016356">
    <property type="entry name" value="Seminal_plasma_PDC-109-like"/>
</dbReference>
<dbReference type="InterPro" id="IPR051666">
    <property type="entry name" value="SP_Capacitation_Regulator"/>
</dbReference>
<dbReference type="PANTHER" id="PTHR22918">
    <property type="entry name" value="SEMINAL PLASMA PROTEIN"/>
    <property type="match status" value="1"/>
</dbReference>
<dbReference type="PANTHER" id="PTHR22918:SF3">
    <property type="entry name" value="SEMINAL PLASMA PROTEIN HSP-1"/>
    <property type="match status" value="1"/>
</dbReference>
<dbReference type="Pfam" id="PF00040">
    <property type="entry name" value="fn2"/>
    <property type="match status" value="2"/>
</dbReference>
<dbReference type="PIRSF" id="PIRSF002541">
    <property type="entry name" value="Seminal_plasma_PDC-109"/>
    <property type="match status" value="1"/>
</dbReference>
<dbReference type="PRINTS" id="PR00013">
    <property type="entry name" value="FNTYPEII"/>
</dbReference>
<dbReference type="SMART" id="SM00059">
    <property type="entry name" value="FN2"/>
    <property type="match status" value="2"/>
</dbReference>
<dbReference type="SUPFAM" id="SSF57440">
    <property type="entry name" value="Kringle-like"/>
    <property type="match status" value="2"/>
</dbReference>
<dbReference type="PROSITE" id="PS00023">
    <property type="entry name" value="FN2_1"/>
    <property type="match status" value="1"/>
</dbReference>
<dbReference type="PROSITE" id="PS51092">
    <property type="entry name" value="FN2_2"/>
    <property type="match status" value="2"/>
</dbReference>
<name>PB1_PIG</name>